<protein>
    <recommendedName>
        <fullName evidence="1">Peptide deformylase</fullName>
        <shortName evidence="1">PDF</shortName>
        <ecNumber evidence="1">3.5.1.88</ecNumber>
    </recommendedName>
    <alternativeName>
        <fullName evidence="1">Polypeptide deformylase</fullName>
    </alternativeName>
</protein>
<accession>Q2S316</accession>
<feature type="chain" id="PRO_0000301093" description="Peptide deformylase">
    <location>
        <begin position="1"/>
        <end position="195"/>
    </location>
</feature>
<feature type="active site" evidence="1">
    <location>
        <position position="145"/>
    </location>
</feature>
<feature type="binding site" evidence="1">
    <location>
        <position position="102"/>
    </location>
    <ligand>
        <name>Fe cation</name>
        <dbReference type="ChEBI" id="CHEBI:24875"/>
    </ligand>
</feature>
<feature type="binding site" evidence="1">
    <location>
        <position position="144"/>
    </location>
    <ligand>
        <name>Fe cation</name>
        <dbReference type="ChEBI" id="CHEBI:24875"/>
    </ligand>
</feature>
<feature type="binding site" evidence="1">
    <location>
        <position position="148"/>
    </location>
    <ligand>
        <name>Fe cation</name>
        <dbReference type="ChEBI" id="CHEBI:24875"/>
    </ligand>
</feature>
<name>DEF_SALRD</name>
<sequence length="195" mass="22304">MILPIYVYGHEALRNETDPVQENTEALQELIDNMIETMHNAAGIGLAAPQVGRTERLFVVDLTPMADEIAEAGEPLPPQPMVFINPEIVEESEDTAEMEEGCLSIPEVREAVARPERIRMRYRDREFEEQELEAGGMLSRVLQHERDHLDGVLFTDYLSSFRKRLLRRPLREMVNGEVEADYPLVTKDDETVPSR</sequence>
<gene>
    <name evidence="1" type="primary">def</name>
    <name type="ordered locus">SRU_1291</name>
</gene>
<keyword id="KW-0378">Hydrolase</keyword>
<keyword id="KW-0408">Iron</keyword>
<keyword id="KW-0479">Metal-binding</keyword>
<keyword id="KW-0648">Protein biosynthesis</keyword>
<keyword id="KW-1185">Reference proteome</keyword>
<proteinExistence type="inferred from homology"/>
<evidence type="ECO:0000255" key="1">
    <source>
        <dbReference type="HAMAP-Rule" id="MF_00163"/>
    </source>
</evidence>
<organism>
    <name type="scientific">Salinibacter ruber (strain DSM 13855 / M31)</name>
    <dbReference type="NCBI Taxonomy" id="309807"/>
    <lineage>
        <taxon>Bacteria</taxon>
        <taxon>Pseudomonadati</taxon>
        <taxon>Rhodothermota</taxon>
        <taxon>Rhodothermia</taxon>
        <taxon>Rhodothermales</taxon>
        <taxon>Salinibacteraceae</taxon>
        <taxon>Salinibacter</taxon>
    </lineage>
</organism>
<reference key="1">
    <citation type="journal article" date="2005" name="Proc. Natl. Acad. Sci. U.S.A.">
        <title>The genome of Salinibacter ruber: convergence and gene exchange among hyperhalophilic bacteria and archaea.</title>
        <authorList>
            <person name="Mongodin E.F."/>
            <person name="Nelson K.E."/>
            <person name="Daugherty S."/>
            <person name="DeBoy R.T."/>
            <person name="Wister J."/>
            <person name="Khouri H."/>
            <person name="Weidman J."/>
            <person name="Walsh D.A."/>
            <person name="Papke R.T."/>
            <person name="Sanchez Perez G."/>
            <person name="Sharma A.K."/>
            <person name="Nesbo C.L."/>
            <person name="MacLeod D."/>
            <person name="Bapteste E."/>
            <person name="Doolittle W.F."/>
            <person name="Charlebois R.L."/>
            <person name="Legault B."/>
            <person name="Rodriguez-Valera F."/>
        </authorList>
    </citation>
    <scope>NUCLEOTIDE SEQUENCE [LARGE SCALE GENOMIC DNA]</scope>
    <source>
        <strain>DSM 13855 / CECT 5946 / M31</strain>
    </source>
</reference>
<comment type="function">
    <text evidence="1">Removes the formyl group from the N-terminal Met of newly synthesized proteins. Requires at least a dipeptide for an efficient rate of reaction. N-terminal L-methionine is a prerequisite for activity but the enzyme has broad specificity at other positions.</text>
</comment>
<comment type="catalytic activity">
    <reaction evidence="1">
        <text>N-terminal N-formyl-L-methionyl-[peptide] + H2O = N-terminal L-methionyl-[peptide] + formate</text>
        <dbReference type="Rhea" id="RHEA:24420"/>
        <dbReference type="Rhea" id="RHEA-COMP:10639"/>
        <dbReference type="Rhea" id="RHEA-COMP:10640"/>
        <dbReference type="ChEBI" id="CHEBI:15377"/>
        <dbReference type="ChEBI" id="CHEBI:15740"/>
        <dbReference type="ChEBI" id="CHEBI:49298"/>
        <dbReference type="ChEBI" id="CHEBI:64731"/>
        <dbReference type="EC" id="3.5.1.88"/>
    </reaction>
</comment>
<comment type="cofactor">
    <cofactor evidence="1">
        <name>Fe(2+)</name>
        <dbReference type="ChEBI" id="CHEBI:29033"/>
    </cofactor>
    <text evidence="1">Binds 1 Fe(2+) ion.</text>
</comment>
<comment type="similarity">
    <text evidence="1">Belongs to the polypeptide deformylase family.</text>
</comment>
<dbReference type="EC" id="3.5.1.88" evidence="1"/>
<dbReference type="EMBL" id="CP000159">
    <property type="protein sequence ID" value="ABC46292.1"/>
    <property type="molecule type" value="Genomic_DNA"/>
</dbReference>
<dbReference type="RefSeq" id="WP_011404043.1">
    <property type="nucleotide sequence ID" value="NC_007677.1"/>
</dbReference>
<dbReference type="RefSeq" id="YP_445415.1">
    <property type="nucleotide sequence ID" value="NC_007677.1"/>
</dbReference>
<dbReference type="SMR" id="Q2S316"/>
<dbReference type="STRING" id="309807.SRU_1291"/>
<dbReference type="EnsemblBacteria" id="ABC46292">
    <property type="protein sequence ID" value="ABC46292"/>
    <property type="gene ID" value="SRU_1291"/>
</dbReference>
<dbReference type="GeneID" id="83728205"/>
<dbReference type="KEGG" id="sru:SRU_1291"/>
<dbReference type="PATRIC" id="fig|309807.25.peg.1342"/>
<dbReference type="eggNOG" id="COG0242">
    <property type="taxonomic scope" value="Bacteria"/>
</dbReference>
<dbReference type="HOGENOM" id="CLU_061901_2_0_10"/>
<dbReference type="OrthoDB" id="9784988at2"/>
<dbReference type="Proteomes" id="UP000008674">
    <property type="component" value="Chromosome"/>
</dbReference>
<dbReference type="GO" id="GO:0046872">
    <property type="term" value="F:metal ion binding"/>
    <property type="evidence" value="ECO:0007669"/>
    <property type="project" value="UniProtKB-KW"/>
</dbReference>
<dbReference type="GO" id="GO:0042586">
    <property type="term" value="F:peptide deformylase activity"/>
    <property type="evidence" value="ECO:0007669"/>
    <property type="project" value="UniProtKB-UniRule"/>
</dbReference>
<dbReference type="GO" id="GO:0043686">
    <property type="term" value="P:co-translational protein modification"/>
    <property type="evidence" value="ECO:0007669"/>
    <property type="project" value="TreeGrafter"/>
</dbReference>
<dbReference type="GO" id="GO:0006412">
    <property type="term" value="P:translation"/>
    <property type="evidence" value="ECO:0007669"/>
    <property type="project" value="UniProtKB-UniRule"/>
</dbReference>
<dbReference type="CDD" id="cd00487">
    <property type="entry name" value="Pep_deformylase"/>
    <property type="match status" value="1"/>
</dbReference>
<dbReference type="Gene3D" id="3.90.45.10">
    <property type="entry name" value="Peptide deformylase"/>
    <property type="match status" value="1"/>
</dbReference>
<dbReference type="HAMAP" id="MF_00163">
    <property type="entry name" value="Pep_deformylase"/>
    <property type="match status" value="1"/>
</dbReference>
<dbReference type="InterPro" id="IPR023635">
    <property type="entry name" value="Peptide_deformylase"/>
</dbReference>
<dbReference type="InterPro" id="IPR036821">
    <property type="entry name" value="Peptide_deformylase_sf"/>
</dbReference>
<dbReference type="NCBIfam" id="TIGR00079">
    <property type="entry name" value="pept_deformyl"/>
    <property type="match status" value="1"/>
</dbReference>
<dbReference type="NCBIfam" id="NF001159">
    <property type="entry name" value="PRK00150.1-3"/>
    <property type="match status" value="1"/>
</dbReference>
<dbReference type="PANTHER" id="PTHR10458">
    <property type="entry name" value="PEPTIDE DEFORMYLASE"/>
    <property type="match status" value="1"/>
</dbReference>
<dbReference type="PANTHER" id="PTHR10458:SF22">
    <property type="entry name" value="PEPTIDE DEFORMYLASE"/>
    <property type="match status" value="1"/>
</dbReference>
<dbReference type="Pfam" id="PF01327">
    <property type="entry name" value="Pep_deformylase"/>
    <property type="match status" value="1"/>
</dbReference>
<dbReference type="PIRSF" id="PIRSF004749">
    <property type="entry name" value="Pep_def"/>
    <property type="match status" value="1"/>
</dbReference>
<dbReference type="PRINTS" id="PR01576">
    <property type="entry name" value="PDEFORMYLASE"/>
</dbReference>
<dbReference type="SUPFAM" id="SSF56420">
    <property type="entry name" value="Peptide deformylase"/>
    <property type="match status" value="1"/>
</dbReference>